<dbReference type="EMBL" id="AL445565">
    <property type="protein sequence ID" value="CAC13756.1"/>
    <property type="molecule type" value="Genomic_DNA"/>
</dbReference>
<dbReference type="PIR" id="G90584">
    <property type="entry name" value="G90584"/>
</dbReference>
<dbReference type="RefSeq" id="WP_010925384.1">
    <property type="nucleotide sequence ID" value="NC_002771.1"/>
</dbReference>
<dbReference type="SMR" id="Q98PY6"/>
<dbReference type="STRING" id="272635.gene:17577190"/>
<dbReference type="KEGG" id="mpu:MYPU_5830"/>
<dbReference type="eggNOG" id="COG0091">
    <property type="taxonomic scope" value="Bacteria"/>
</dbReference>
<dbReference type="HOGENOM" id="CLU_083987_3_3_14"/>
<dbReference type="BioCyc" id="MPUL272635:G1GT6-595-MONOMER"/>
<dbReference type="Proteomes" id="UP000000528">
    <property type="component" value="Chromosome"/>
</dbReference>
<dbReference type="GO" id="GO:0022625">
    <property type="term" value="C:cytosolic large ribosomal subunit"/>
    <property type="evidence" value="ECO:0007669"/>
    <property type="project" value="TreeGrafter"/>
</dbReference>
<dbReference type="GO" id="GO:0019843">
    <property type="term" value="F:rRNA binding"/>
    <property type="evidence" value="ECO:0007669"/>
    <property type="project" value="UniProtKB-UniRule"/>
</dbReference>
<dbReference type="GO" id="GO:0003735">
    <property type="term" value="F:structural constituent of ribosome"/>
    <property type="evidence" value="ECO:0007669"/>
    <property type="project" value="InterPro"/>
</dbReference>
<dbReference type="GO" id="GO:0006412">
    <property type="term" value="P:translation"/>
    <property type="evidence" value="ECO:0007669"/>
    <property type="project" value="UniProtKB-UniRule"/>
</dbReference>
<dbReference type="CDD" id="cd00336">
    <property type="entry name" value="Ribosomal_L22"/>
    <property type="match status" value="1"/>
</dbReference>
<dbReference type="Gene3D" id="3.90.470.10">
    <property type="entry name" value="Ribosomal protein L22/L17"/>
    <property type="match status" value="1"/>
</dbReference>
<dbReference type="HAMAP" id="MF_01331_B">
    <property type="entry name" value="Ribosomal_uL22_B"/>
    <property type="match status" value="1"/>
</dbReference>
<dbReference type="InterPro" id="IPR001063">
    <property type="entry name" value="Ribosomal_uL22"/>
</dbReference>
<dbReference type="InterPro" id="IPR005727">
    <property type="entry name" value="Ribosomal_uL22_bac/chlpt-type"/>
</dbReference>
<dbReference type="InterPro" id="IPR047867">
    <property type="entry name" value="Ribosomal_uL22_bac/org-type"/>
</dbReference>
<dbReference type="InterPro" id="IPR018260">
    <property type="entry name" value="Ribosomal_uL22_CS"/>
</dbReference>
<dbReference type="InterPro" id="IPR036394">
    <property type="entry name" value="Ribosomal_uL22_sf"/>
</dbReference>
<dbReference type="NCBIfam" id="TIGR01044">
    <property type="entry name" value="rplV_bact"/>
    <property type="match status" value="1"/>
</dbReference>
<dbReference type="PANTHER" id="PTHR13501">
    <property type="entry name" value="CHLOROPLAST 50S RIBOSOMAL PROTEIN L22-RELATED"/>
    <property type="match status" value="1"/>
</dbReference>
<dbReference type="PANTHER" id="PTHR13501:SF8">
    <property type="entry name" value="LARGE RIBOSOMAL SUBUNIT PROTEIN UL22M"/>
    <property type="match status" value="1"/>
</dbReference>
<dbReference type="Pfam" id="PF00237">
    <property type="entry name" value="Ribosomal_L22"/>
    <property type="match status" value="1"/>
</dbReference>
<dbReference type="SUPFAM" id="SSF54843">
    <property type="entry name" value="Ribosomal protein L22"/>
    <property type="match status" value="1"/>
</dbReference>
<dbReference type="PROSITE" id="PS00464">
    <property type="entry name" value="RIBOSOMAL_L22"/>
    <property type="match status" value="1"/>
</dbReference>
<proteinExistence type="inferred from homology"/>
<accession>Q98PY6</accession>
<name>RL22_MYCPU</name>
<keyword id="KW-1185">Reference proteome</keyword>
<keyword id="KW-0687">Ribonucleoprotein</keyword>
<keyword id="KW-0689">Ribosomal protein</keyword>
<keyword id="KW-0694">RNA-binding</keyword>
<keyword id="KW-0699">rRNA-binding</keyword>
<organism>
    <name type="scientific">Mycoplasmopsis pulmonis (strain UAB CTIP)</name>
    <name type="common">Mycoplasma pulmonis</name>
    <dbReference type="NCBI Taxonomy" id="272635"/>
    <lineage>
        <taxon>Bacteria</taxon>
        <taxon>Bacillati</taxon>
        <taxon>Mycoplasmatota</taxon>
        <taxon>Mycoplasmoidales</taxon>
        <taxon>Metamycoplasmataceae</taxon>
        <taxon>Mycoplasmopsis</taxon>
    </lineage>
</organism>
<evidence type="ECO:0000255" key="1">
    <source>
        <dbReference type="HAMAP-Rule" id="MF_01331"/>
    </source>
</evidence>
<evidence type="ECO:0000305" key="2"/>
<reference key="1">
    <citation type="journal article" date="2001" name="Nucleic Acids Res.">
        <title>The complete genome sequence of the murine respiratory pathogen Mycoplasma pulmonis.</title>
        <authorList>
            <person name="Chambaud I."/>
            <person name="Heilig R."/>
            <person name="Ferris S."/>
            <person name="Barbe V."/>
            <person name="Samson D."/>
            <person name="Galisson F."/>
            <person name="Moszer I."/>
            <person name="Dybvig K."/>
            <person name="Wroblewski H."/>
            <person name="Viari A."/>
            <person name="Rocha E.P.C."/>
            <person name="Blanchard A."/>
        </authorList>
    </citation>
    <scope>NUCLEOTIDE SEQUENCE [LARGE SCALE GENOMIC DNA]</scope>
    <source>
        <strain>UAB CTIP</strain>
    </source>
</reference>
<sequence length="110" mass="12151">MEVRALLKTVRVSSKKASLVANLFRHQSTANAISILKNTNKKSAPIFLKILNSAISNAVNNHGLDASKLYVSNVMVNEGPTLKRFQPHSQGRATRILKRTSHLSVMVSER</sequence>
<comment type="function">
    <text evidence="1">This protein binds specifically to 23S rRNA; its binding is stimulated by other ribosomal proteins, e.g. L4, L17, and L20. It is important during the early stages of 50S assembly. It makes multiple contacts with different domains of the 23S rRNA in the assembled 50S subunit and ribosome (By similarity).</text>
</comment>
<comment type="function">
    <text evidence="1">The globular domain of the protein is located near the polypeptide exit tunnel on the outside of the subunit, while an extended beta-hairpin is found that lines the wall of the exit tunnel in the center of the 70S ribosome.</text>
</comment>
<comment type="subunit">
    <text evidence="1">Part of the 50S ribosomal subunit.</text>
</comment>
<comment type="similarity">
    <text evidence="1">Belongs to the universal ribosomal protein uL22 family.</text>
</comment>
<protein>
    <recommendedName>
        <fullName evidence="1">Large ribosomal subunit protein uL22</fullName>
    </recommendedName>
    <alternativeName>
        <fullName evidence="2">50S ribosomal protein L22</fullName>
    </alternativeName>
</protein>
<feature type="chain" id="PRO_0000125185" description="Large ribosomal subunit protein uL22">
    <location>
        <begin position="1"/>
        <end position="110"/>
    </location>
</feature>
<gene>
    <name evidence="1" type="primary">rplV</name>
    <name type="ordered locus">MYPU_5830</name>
</gene>